<reference key="1">
    <citation type="journal article" date="2008" name="DNA Res.">
        <title>Complete genome sequence and comparative analysis of the wild-type commensal Escherichia coli strain SE11 isolated from a healthy adult.</title>
        <authorList>
            <person name="Oshima K."/>
            <person name="Toh H."/>
            <person name="Ogura Y."/>
            <person name="Sasamoto H."/>
            <person name="Morita H."/>
            <person name="Park S.-H."/>
            <person name="Ooka T."/>
            <person name="Iyoda S."/>
            <person name="Taylor T.D."/>
            <person name="Hayashi T."/>
            <person name="Itoh K."/>
            <person name="Hattori M."/>
        </authorList>
    </citation>
    <scope>NUCLEOTIDE SEQUENCE [LARGE SCALE GENOMIC DNA]</scope>
    <source>
        <strain>SE11</strain>
    </source>
</reference>
<sequence length="412" mass="44194">MTNYRVESSSGRAARKMRLALMGPAFIAAIGYIDPGNFATNIQAGASFGYQLLWVVVWANLMAMLIQILSAKLGIATGKNLAEQIRDHYPRPVVWFYWVQAEIIAMATDLAEFIGAAIGFKLILGVSLLQGAVLTGIATFLILMLQRRGQKPLEKVIGGLLLFVAAAYIVELIFSQPNLAQLGKGMVIPSLPTSEAVFLAAGVLGATIMPHVIYLHSSLTQHLHGGSRQQRYSATKWDVAIAMTIAGFVNLAMMATAAAAFHFSGHTGVADLDEAYLTLQPLLSHAAATVFGLSLVAAGLSSTVVGTLAGQVVMQGFIRFHIPLWVRRTVTMLPSFIVILMGLDPTRILVMSQVLLSFGIALALVPLLIFTSDSKLMGDLVNSKRVKQTGWVIVVLVVALNIWLLVGTALGL</sequence>
<proteinExistence type="inferred from homology"/>
<organism>
    <name type="scientific">Escherichia coli (strain SE11)</name>
    <dbReference type="NCBI Taxonomy" id="409438"/>
    <lineage>
        <taxon>Bacteria</taxon>
        <taxon>Pseudomonadati</taxon>
        <taxon>Pseudomonadota</taxon>
        <taxon>Gammaproteobacteria</taxon>
        <taxon>Enterobacterales</taxon>
        <taxon>Enterobacteriaceae</taxon>
        <taxon>Escherichia</taxon>
    </lineage>
</organism>
<feature type="chain" id="PRO_1000100084" description="Divalent metal cation transporter MntH">
    <location>
        <begin position="1"/>
        <end position="412"/>
    </location>
</feature>
<feature type="topological domain" description="Cytoplasmic" evidence="1">
    <location>
        <begin position="1"/>
        <end position="19"/>
    </location>
</feature>
<feature type="transmembrane region" description="Helical" evidence="1">
    <location>
        <begin position="20"/>
        <end position="39"/>
    </location>
</feature>
<feature type="topological domain" description="Periplasmic" evidence="1">
    <location>
        <begin position="40"/>
        <end position="51"/>
    </location>
</feature>
<feature type="transmembrane region" description="Helical" evidence="1">
    <location>
        <begin position="52"/>
        <end position="71"/>
    </location>
</feature>
<feature type="topological domain" description="Cytoplasmic" evidence="1">
    <location>
        <begin position="72"/>
        <end position="95"/>
    </location>
</feature>
<feature type="transmembrane region" description="Helical" evidence="1">
    <location>
        <begin position="96"/>
        <end position="118"/>
    </location>
</feature>
<feature type="topological domain" description="Periplasmic" evidence="1">
    <location>
        <begin position="119"/>
        <end position="125"/>
    </location>
</feature>
<feature type="transmembrane region" description="Helical" evidence="1">
    <location>
        <begin position="126"/>
        <end position="145"/>
    </location>
</feature>
<feature type="topological domain" description="Cytoplasmic" evidence="1">
    <location>
        <begin position="146"/>
        <end position="155"/>
    </location>
</feature>
<feature type="transmembrane region" description="Helical" evidence="1">
    <location>
        <begin position="156"/>
        <end position="175"/>
    </location>
</feature>
<feature type="topological domain" description="Periplasmic" evidence="1">
    <location>
        <begin position="176"/>
        <end position="196"/>
    </location>
</feature>
<feature type="transmembrane region" description="Helical" evidence="1">
    <location>
        <begin position="197"/>
        <end position="220"/>
    </location>
</feature>
<feature type="topological domain" description="Cytoplasmic" evidence="1">
    <location>
        <begin position="221"/>
        <end position="238"/>
    </location>
</feature>
<feature type="transmembrane region" description="Helical" evidence="1">
    <location>
        <begin position="239"/>
        <end position="258"/>
    </location>
</feature>
<feature type="topological domain" description="Periplasmic" evidence="1">
    <location>
        <begin position="259"/>
        <end position="276"/>
    </location>
</feature>
<feature type="transmembrane region" description="Helical" evidence="1">
    <location>
        <begin position="277"/>
        <end position="297"/>
    </location>
</feature>
<feature type="topological domain" description="Cytoplasmic" evidence="1">
    <location>
        <begin position="298"/>
        <end position="327"/>
    </location>
</feature>
<feature type="transmembrane region" description="Helical" evidence="1">
    <location>
        <begin position="328"/>
        <end position="344"/>
    </location>
</feature>
<feature type="topological domain" description="Periplasmic" evidence="1">
    <location>
        <begin position="345"/>
        <end position="350"/>
    </location>
</feature>
<feature type="transmembrane region" description="Helical" evidence="1">
    <location>
        <begin position="351"/>
        <end position="370"/>
    </location>
</feature>
<feature type="topological domain" description="Cytoplasmic" evidence="1">
    <location>
        <begin position="371"/>
        <end position="387"/>
    </location>
</feature>
<feature type="transmembrane region" description="Helical" evidence="1">
    <location>
        <begin position="388"/>
        <end position="406"/>
    </location>
</feature>
<feature type="topological domain" description="Periplasmic" evidence="1">
    <location>
        <begin position="407"/>
        <end position="412"/>
    </location>
</feature>
<evidence type="ECO:0000255" key="1">
    <source>
        <dbReference type="HAMAP-Rule" id="MF_00221"/>
    </source>
</evidence>
<gene>
    <name evidence="1" type="primary">mntH</name>
    <name type="ordered locus">ECSE_2688</name>
</gene>
<comment type="function">
    <text evidence="1">H(+)-stimulated, divalent metal cation uptake system.</text>
</comment>
<comment type="subcellular location">
    <subcellularLocation>
        <location evidence="1">Cell inner membrane</location>
        <topology evidence="1">Multi-pass membrane protein</topology>
    </subcellularLocation>
</comment>
<comment type="similarity">
    <text evidence="1">Belongs to the NRAMP family.</text>
</comment>
<accession>B6I6U2</accession>
<keyword id="KW-0997">Cell inner membrane</keyword>
<keyword id="KW-1003">Cell membrane</keyword>
<keyword id="KW-0406">Ion transport</keyword>
<keyword id="KW-0472">Membrane</keyword>
<keyword id="KW-0769">Symport</keyword>
<keyword id="KW-0812">Transmembrane</keyword>
<keyword id="KW-1133">Transmembrane helix</keyword>
<keyword id="KW-0813">Transport</keyword>
<name>MNTH_ECOSE</name>
<dbReference type="EMBL" id="AP009240">
    <property type="protein sequence ID" value="BAG78212.1"/>
    <property type="molecule type" value="Genomic_DNA"/>
</dbReference>
<dbReference type="RefSeq" id="WP_000186369.1">
    <property type="nucleotide sequence ID" value="NC_011415.1"/>
</dbReference>
<dbReference type="SMR" id="B6I6U2"/>
<dbReference type="KEGG" id="ecy:ECSE_2688"/>
<dbReference type="HOGENOM" id="CLU_020088_2_0_6"/>
<dbReference type="Proteomes" id="UP000008199">
    <property type="component" value="Chromosome"/>
</dbReference>
<dbReference type="GO" id="GO:0005886">
    <property type="term" value="C:plasma membrane"/>
    <property type="evidence" value="ECO:0007669"/>
    <property type="project" value="UniProtKB-SubCell"/>
</dbReference>
<dbReference type="GO" id="GO:0015086">
    <property type="term" value="F:cadmium ion transmembrane transporter activity"/>
    <property type="evidence" value="ECO:0007669"/>
    <property type="project" value="TreeGrafter"/>
</dbReference>
<dbReference type="GO" id="GO:0005384">
    <property type="term" value="F:manganese ion transmembrane transporter activity"/>
    <property type="evidence" value="ECO:0007669"/>
    <property type="project" value="TreeGrafter"/>
</dbReference>
<dbReference type="GO" id="GO:0046872">
    <property type="term" value="F:metal ion binding"/>
    <property type="evidence" value="ECO:0007669"/>
    <property type="project" value="UniProtKB-UniRule"/>
</dbReference>
<dbReference type="GO" id="GO:0015293">
    <property type="term" value="F:symporter activity"/>
    <property type="evidence" value="ECO:0007669"/>
    <property type="project" value="UniProtKB-UniRule"/>
</dbReference>
<dbReference type="GO" id="GO:0034755">
    <property type="term" value="P:iron ion transmembrane transport"/>
    <property type="evidence" value="ECO:0007669"/>
    <property type="project" value="TreeGrafter"/>
</dbReference>
<dbReference type="HAMAP" id="MF_00221">
    <property type="entry name" value="NRAMP"/>
    <property type="match status" value="1"/>
</dbReference>
<dbReference type="InterPro" id="IPR001046">
    <property type="entry name" value="NRAMP_fam"/>
</dbReference>
<dbReference type="NCBIfam" id="TIGR01197">
    <property type="entry name" value="nramp"/>
    <property type="match status" value="1"/>
</dbReference>
<dbReference type="NCBIfam" id="NF037982">
    <property type="entry name" value="Nramp_1"/>
    <property type="match status" value="1"/>
</dbReference>
<dbReference type="NCBIfam" id="NF001923">
    <property type="entry name" value="PRK00701.1"/>
    <property type="match status" value="1"/>
</dbReference>
<dbReference type="PANTHER" id="PTHR11706:SF33">
    <property type="entry name" value="NATURAL RESISTANCE-ASSOCIATED MACROPHAGE PROTEIN 2"/>
    <property type="match status" value="1"/>
</dbReference>
<dbReference type="PANTHER" id="PTHR11706">
    <property type="entry name" value="SOLUTE CARRIER PROTEIN FAMILY 11 MEMBER"/>
    <property type="match status" value="1"/>
</dbReference>
<dbReference type="Pfam" id="PF01566">
    <property type="entry name" value="Nramp"/>
    <property type="match status" value="1"/>
</dbReference>
<dbReference type="PRINTS" id="PR00447">
    <property type="entry name" value="NATRESASSCMP"/>
</dbReference>
<protein>
    <recommendedName>
        <fullName evidence="1">Divalent metal cation transporter MntH</fullName>
    </recommendedName>
</protein>